<keyword id="KW-0238">DNA-binding</keyword>
<keyword id="KW-0539">Nucleus</keyword>
<keyword id="KW-1185">Reference proteome</keyword>
<keyword id="KW-0804">Transcription</keyword>
<keyword id="KW-0805">Transcription regulation</keyword>
<evidence type="ECO:0000256" key="1">
    <source>
        <dbReference type="SAM" id="MobiDB-lite"/>
    </source>
</evidence>
<evidence type="ECO:0000269" key="2">
    <source>
    </source>
</evidence>
<evidence type="ECO:0000303" key="3">
    <source>
    </source>
</evidence>
<evidence type="ECO:0000305" key="4">
    <source>
    </source>
</evidence>
<organism>
    <name type="scientific">Fusarium pseudograminearum (strain CS3096)</name>
    <name type="common">Wheat and barley crown-rot fungus</name>
    <dbReference type="NCBI Taxonomy" id="1028729"/>
    <lineage>
        <taxon>Eukaryota</taxon>
        <taxon>Fungi</taxon>
        <taxon>Dikarya</taxon>
        <taxon>Ascomycota</taxon>
        <taxon>Pezizomycotina</taxon>
        <taxon>Sordariomycetes</taxon>
        <taxon>Hypocreomycetidae</taxon>
        <taxon>Hypocreales</taxon>
        <taxon>Nectriaceae</taxon>
        <taxon>Fusarium</taxon>
    </lineage>
</organism>
<name>W4937_FUSPC</name>
<comment type="function">
    <text evidence="2 4">The two putative transcription factors FPSE_09188 and FPSE_09189 could be responsible for orchestrating expression of the W493 A and B biosynthesis cluster genes (Probable). W493 A and B consist of six amino acid residues D-allo-thr, L-Ala, D-Ala, L-Gln, D-Tyr, and L-Val/L-Ile linked to a 3-hydroxy-4-methyltetradecanoic acid polyketide chain (PubMed:25412204).</text>
</comment>
<comment type="subcellular location">
    <subcellularLocation>
        <location evidence="4">Nucleus</location>
    </subcellularLocation>
</comment>
<feature type="chain" id="PRO_0000445373" description="Probable transcription factor FPSE_09189">
    <location>
        <begin position="1"/>
        <end position="500"/>
    </location>
</feature>
<feature type="region of interest" description="Disordered" evidence="1">
    <location>
        <begin position="161"/>
        <end position="197"/>
    </location>
</feature>
<feature type="region of interest" description="Disordered" evidence="1">
    <location>
        <begin position="457"/>
        <end position="500"/>
    </location>
</feature>
<feature type="compositionally biased region" description="Basic and acidic residues" evidence="1">
    <location>
        <begin position="459"/>
        <end position="474"/>
    </location>
</feature>
<feature type="compositionally biased region" description="Polar residues" evidence="1">
    <location>
        <begin position="475"/>
        <end position="484"/>
    </location>
</feature>
<gene>
    <name type="ORF">FPSE_09189</name>
</gene>
<reference key="1">
    <citation type="journal article" date="2012" name="PLoS Pathog.">
        <title>Comparative pathogenomics reveals horizontally acquired novel virulence genes in fungi infecting cereal hosts.</title>
        <authorList>
            <person name="Gardiner D.M."/>
            <person name="McDonald M.C."/>
            <person name="Covarelli L."/>
            <person name="Solomon P.S."/>
            <person name="Rusu A.G."/>
            <person name="Marshall M."/>
            <person name="Kazan K."/>
            <person name="Chakraborty S."/>
            <person name="McDonald B.A."/>
            <person name="Manners J.M."/>
        </authorList>
    </citation>
    <scope>NUCLEOTIDE SEQUENCE [LARGE SCALE GENOMIC DNA]</scope>
    <source>
        <strain>CS3096</strain>
    </source>
</reference>
<reference key="2">
    <citation type="journal article" date="2014" name="J. Nat. Prod.">
        <title>Identification of the biosynthetic gene clusters for the lipopeptides fusaristatin A and W493 B in Fusarium graminearum and F. pseudograminearum.</title>
        <authorList>
            <person name="Soerensen J.L."/>
            <person name="Sondergaard T.E."/>
            <person name="Covarelli L."/>
            <person name="Fuertes P.R."/>
            <person name="Hansen F.T."/>
            <person name="Frandsen R.J."/>
            <person name="Saei W."/>
            <person name="Lukassen M.B."/>
            <person name="Wimmer R."/>
            <person name="Nielsen K.F."/>
            <person name="Gardiner D.M."/>
            <person name="Giese H."/>
        </authorList>
    </citation>
    <scope>IDENTIFICATION</scope>
    <scope>FUNCTION</scope>
</reference>
<accession>K3VAW8</accession>
<protein>
    <recommendedName>
        <fullName evidence="3">Probable transcription factor FPSE_09189</fullName>
    </recommendedName>
    <alternativeName>
        <fullName evidence="3">W493 A and B biosynthesis cluster protein FPSE_09189</fullName>
    </alternativeName>
</protein>
<dbReference type="EMBL" id="CM003198">
    <property type="protein sequence ID" value="EKJ70679.1"/>
    <property type="molecule type" value="Genomic_DNA"/>
</dbReference>
<dbReference type="RefSeq" id="XP_009260581.1">
    <property type="nucleotide sequence ID" value="XM_009262306.1"/>
</dbReference>
<dbReference type="SMR" id="K3VAW8"/>
<dbReference type="EnsemblFungi" id="EKJ70679">
    <property type="protein sequence ID" value="EKJ70679"/>
    <property type="gene ID" value="FPSE_09189"/>
</dbReference>
<dbReference type="GeneID" id="20367806"/>
<dbReference type="KEGG" id="fpu:FPSE_09189"/>
<dbReference type="eggNOG" id="ENOG502QQ9D">
    <property type="taxonomic scope" value="Eukaryota"/>
</dbReference>
<dbReference type="HOGENOM" id="CLU_033363_1_0_1"/>
<dbReference type="OrthoDB" id="37730at2759"/>
<dbReference type="Proteomes" id="UP000007978">
    <property type="component" value="Chromosome 1"/>
</dbReference>
<dbReference type="GO" id="GO:0005634">
    <property type="term" value="C:nucleus"/>
    <property type="evidence" value="ECO:0007669"/>
    <property type="project" value="UniProtKB-SubCell"/>
</dbReference>
<dbReference type="GO" id="GO:0003677">
    <property type="term" value="F:DNA binding"/>
    <property type="evidence" value="ECO:0007669"/>
    <property type="project" value="UniProtKB-KW"/>
</dbReference>
<dbReference type="CDD" id="cd19357">
    <property type="entry name" value="TenA_E_At3g16990-like"/>
    <property type="match status" value="1"/>
</dbReference>
<dbReference type="Gene3D" id="1.20.910.10">
    <property type="entry name" value="Heme oxygenase-like"/>
    <property type="match status" value="1"/>
</dbReference>
<dbReference type="InterPro" id="IPR016084">
    <property type="entry name" value="Haem_Oase-like_multi-hlx"/>
</dbReference>
<dbReference type="InterPro" id="IPR053261">
    <property type="entry name" value="Polyketide-peptide_reg"/>
</dbReference>
<dbReference type="PANTHER" id="PTHR41813">
    <property type="entry name" value="REGULATOR PAB1642, PUTATIVE (AFU_ORTHOLOGUE AFUA_3G11955)-RELATED"/>
    <property type="match status" value="1"/>
</dbReference>
<dbReference type="PANTHER" id="PTHR41813:SF2">
    <property type="entry name" value="REGULATOR PAB1642, PUTATIVE (AFU_ORTHOLOGUE AFUA_3G11955)-RELATED"/>
    <property type="match status" value="1"/>
</dbReference>
<dbReference type="SUPFAM" id="SSF48613">
    <property type="entry name" value="Heme oxygenase-like"/>
    <property type="match status" value="1"/>
</dbReference>
<proteinExistence type="predicted"/>
<sequence length="500" mass="55684">MPRPADTYTHDQGHLQNCPEYVAWRVAGNGQELAPTNPYNATGRRAFADSYGFDNSNLDLRPDQEVPTMQRIRSTLDMSKYFDEFFDDSLDHKCARVRCRSCGFVRAKNATRQADHLTQCKDFLATDEGEELMASGSLVHNVQQHQPPAIWNGARPHPDLMVRHLSNHPPSGTVPVGPCSRPEPSRASQRPEPPSLAQHLLDQSDDLLTNAVQHSFLAHAGSGSLSENDFNQWLAQIGYISRSLVPFTGALIGKIRIPETGNLEHDSTFRCLDLLCSAVTNMKKELEFLEATKREYGLEVGLDEPRPATKSFIDLFNSASCASATLLEGMVLLWAVEILFYNSFSYAGSFVAQPMPTQERSSFSLPSYSLPSSASPGAYSGQTIRKDRHTTALREAFIKNWKSENFSQFVDVCKSIVDELAMDQMTGNGRADTSACERVFNQAVWLWAQVFPQTTGIRTGHEDSSRDGGRENKAMNRNRSTGNSVEIEDEYNVQTSTQLE</sequence>